<reference key="1">
    <citation type="submission" date="2004-12" db="EMBL/GenBank/DDBJ databases">
        <title>The genome sequence of Borrelia hermsii and Borrelia turicatae: comparative analysis of two agents of endemic N. America relapsing fever.</title>
        <authorList>
            <person name="Porcella S.F."/>
            <person name="Raffel S.J."/>
            <person name="Schrumpf M.E."/>
            <person name="Montgomery B."/>
            <person name="Smith T."/>
            <person name="Schwan T.G."/>
        </authorList>
    </citation>
    <scope>NUCLEOTIDE SEQUENCE [LARGE SCALE GENOMIC DNA]</scope>
    <source>
        <strain>HS1 / DAH</strain>
    </source>
</reference>
<gene>
    <name evidence="1" type="primary">cmk</name>
    <name type="ordered locus">BH0128</name>
</gene>
<accession>B2RZJ4</accession>
<name>KCY_BORHD</name>
<evidence type="ECO:0000255" key="1">
    <source>
        <dbReference type="HAMAP-Rule" id="MF_00238"/>
    </source>
</evidence>
<proteinExistence type="inferred from homology"/>
<sequence length="218" mass="25044">MIIAIDGPSASGKSSIAKALGSRLGFKFISSGYFYRIITLIAQKFTLNEYDLLSESKILELVLQNDIKFNGVDFLLNGVNVTSHILNERIDLQVSLYSSYIGVRNIVNKKLREIVKLKDDNYIIEGRDITTVVFPEAKVKIYLDASVKVRALRRYNQRDDDITLNELEQALERRDEIDQNKEYGKLKLAKEVFYIDTSYKCLDDVCDIIIKTFNLKKK</sequence>
<protein>
    <recommendedName>
        <fullName evidence="1">Cytidylate kinase</fullName>
        <shortName evidence="1">CK</shortName>
        <ecNumber evidence="1">2.7.4.25</ecNumber>
    </recommendedName>
    <alternativeName>
        <fullName evidence="1">Cytidine monophosphate kinase</fullName>
        <shortName evidence="1">CMP kinase</shortName>
    </alternativeName>
</protein>
<dbReference type="EC" id="2.7.4.25" evidence="1"/>
<dbReference type="EMBL" id="CP000048">
    <property type="protein sequence ID" value="AAX16650.1"/>
    <property type="molecule type" value="Genomic_DNA"/>
</dbReference>
<dbReference type="RefSeq" id="WP_012421907.1">
    <property type="nucleotide sequence ID" value="NZ_CP073136.1"/>
</dbReference>
<dbReference type="SMR" id="B2RZJ4"/>
<dbReference type="GeneID" id="71842940"/>
<dbReference type="KEGG" id="bhr:BH0128"/>
<dbReference type="HOGENOM" id="CLU_079959_0_2_12"/>
<dbReference type="Proteomes" id="UP000008834">
    <property type="component" value="Chromosome"/>
</dbReference>
<dbReference type="GO" id="GO:0005737">
    <property type="term" value="C:cytoplasm"/>
    <property type="evidence" value="ECO:0007669"/>
    <property type="project" value="UniProtKB-SubCell"/>
</dbReference>
<dbReference type="GO" id="GO:0005524">
    <property type="term" value="F:ATP binding"/>
    <property type="evidence" value="ECO:0007669"/>
    <property type="project" value="UniProtKB-UniRule"/>
</dbReference>
<dbReference type="GO" id="GO:0036430">
    <property type="term" value="F:CMP kinase activity"/>
    <property type="evidence" value="ECO:0007669"/>
    <property type="project" value="RHEA"/>
</dbReference>
<dbReference type="GO" id="GO:0036431">
    <property type="term" value="F:dCMP kinase activity"/>
    <property type="evidence" value="ECO:0007669"/>
    <property type="project" value="RHEA"/>
</dbReference>
<dbReference type="GO" id="GO:0006220">
    <property type="term" value="P:pyrimidine nucleotide metabolic process"/>
    <property type="evidence" value="ECO:0007669"/>
    <property type="project" value="UniProtKB-UniRule"/>
</dbReference>
<dbReference type="CDD" id="cd02020">
    <property type="entry name" value="CMPK"/>
    <property type="match status" value="1"/>
</dbReference>
<dbReference type="Gene3D" id="3.40.50.300">
    <property type="entry name" value="P-loop containing nucleotide triphosphate hydrolases"/>
    <property type="match status" value="1"/>
</dbReference>
<dbReference type="HAMAP" id="MF_00238">
    <property type="entry name" value="Cytidyl_kinase_type1"/>
    <property type="match status" value="1"/>
</dbReference>
<dbReference type="InterPro" id="IPR003136">
    <property type="entry name" value="Cytidylate_kin"/>
</dbReference>
<dbReference type="InterPro" id="IPR011994">
    <property type="entry name" value="Cytidylate_kinase_dom"/>
</dbReference>
<dbReference type="InterPro" id="IPR027417">
    <property type="entry name" value="P-loop_NTPase"/>
</dbReference>
<dbReference type="NCBIfam" id="TIGR00017">
    <property type="entry name" value="cmk"/>
    <property type="match status" value="1"/>
</dbReference>
<dbReference type="Pfam" id="PF02224">
    <property type="entry name" value="Cytidylate_kin"/>
    <property type="match status" value="1"/>
</dbReference>
<dbReference type="SUPFAM" id="SSF52540">
    <property type="entry name" value="P-loop containing nucleoside triphosphate hydrolases"/>
    <property type="match status" value="1"/>
</dbReference>
<organism>
    <name type="scientific">Borrelia hermsii (strain HS1 / DAH)</name>
    <dbReference type="NCBI Taxonomy" id="314723"/>
    <lineage>
        <taxon>Bacteria</taxon>
        <taxon>Pseudomonadati</taxon>
        <taxon>Spirochaetota</taxon>
        <taxon>Spirochaetia</taxon>
        <taxon>Spirochaetales</taxon>
        <taxon>Borreliaceae</taxon>
        <taxon>Borrelia</taxon>
    </lineage>
</organism>
<feature type="chain" id="PRO_1000100647" description="Cytidylate kinase">
    <location>
        <begin position="1"/>
        <end position="218"/>
    </location>
</feature>
<feature type="binding site" evidence="1">
    <location>
        <begin position="7"/>
        <end position="15"/>
    </location>
    <ligand>
        <name>ATP</name>
        <dbReference type="ChEBI" id="CHEBI:30616"/>
    </ligand>
</feature>
<keyword id="KW-0067">ATP-binding</keyword>
<keyword id="KW-0963">Cytoplasm</keyword>
<keyword id="KW-0418">Kinase</keyword>
<keyword id="KW-0547">Nucleotide-binding</keyword>
<keyword id="KW-0808">Transferase</keyword>
<comment type="catalytic activity">
    <reaction evidence="1">
        <text>CMP + ATP = CDP + ADP</text>
        <dbReference type="Rhea" id="RHEA:11600"/>
        <dbReference type="ChEBI" id="CHEBI:30616"/>
        <dbReference type="ChEBI" id="CHEBI:58069"/>
        <dbReference type="ChEBI" id="CHEBI:60377"/>
        <dbReference type="ChEBI" id="CHEBI:456216"/>
        <dbReference type="EC" id="2.7.4.25"/>
    </reaction>
</comment>
<comment type="catalytic activity">
    <reaction evidence="1">
        <text>dCMP + ATP = dCDP + ADP</text>
        <dbReference type="Rhea" id="RHEA:25094"/>
        <dbReference type="ChEBI" id="CHEBI:30616"/>
        <dbReference type="ChEBI" id="CHEBI:57566"/>
        <dbReference type="ChEBI" id="CHEBI:58593"/>
        <dbReference type="ChEBI" id="CHEBI:456216"/>
        <dbReference type="EC" id="2.7.4.25"/>
    </reaction>
</comment>
<comment type="subcellular location">
    <subcellularLocation>
        <location evidence="1">Cytoplasm</location>
    </subcellularLocation>
</comment>
<comment type="similarity">
    <text evidence="1">Belongs to the cytidylate kinase family. Type 1 subfamily.</text>
</comment>